<organism>
    <name type="scientific">Microcystis aeruginosa</name>
    <dbReference type="NCBI Taxonomy" id="1126"/>
    <lineage>
        <taxon>Bacteria</taxon>
        <taxon>Bacillati</taxon>
        <taxon>Cyanobacteriota</taxon>
        <taxon>Cyanophyceae</taxon>
        <taxon>Oscillatoriophycideae</taxon>
        <taxon>Chroococcales</taxon>
        <taxon>Microcystaceae</taxon>
        <taxon>Microcystis</taxon>
    </lineage>
</organism>
<feature type="chain" id="PRO_0000357291" description="2,3-diketo-5-methylthiopentyl-1-phosphate enolase">
    <location>
        <begin position="1"/>
        <end position="386"/>
    </location>
</feature>
<feature type="active site" description="Proton acceptor" evidence="1">
    <location>
        <position position="85"/>
    </location>
</feature>
<feature type="binding site" evidence="1">
    <location>
        <position position="131"/>
    </location>
    <ligand>
        <name>substrate</name>
    </ligand>
</feature>
<feature type="binding site" evidence="1">
    <location>
        <begin position="157"/>
        <end position="160"/>
    </location>
    <ligand>
        <name>substrate</name>
    </ligand>
</feature>
<feature type="binding site" description="via carbamate group" evidence="1">
    <location>
        <position position="157"/>
    </location>
    <ligand>
        <name>Mg(2+)</name>
        <dbReference type="ChEBI" id="CHEBI:18420"/>
    </ligand>
</feature>
<feature type="binding site" evidence="1">
    <location>
        <position position="159"/>
    </location>
    <ligand>
        <name>Mg(2+)</name>
        <dbReference type="ChEBI" id="CHEBI:18420"/>
    </ligand>
</feature>
<feature type="binding site" evidence="1">
    <location>
        <position position="160"/>
    </location>
    <ligand>
        <name>Mg(2+)</name>
        <dbReference type="ChEBI" id="CHEBI:18420"/>
    </ligand>
</feature>
<feature type="binding site" evidence="1">
    <location>
        <position position="248"/>
    </location>
    <ligand>
        <name>substrate</name>
    </ligand>
</feature>
<feature type="binding site" evidence="1">
    <location>
        <position position="316"/>
    </location>
    <ligand>
        <name>substrate</name>
    </ligand>
</feature>
<feature type="binding site" evidence="1">
    <location>
        <begin position="338"/>
        <end position="339"/>
    </location>
    <ligand>
        <name>substrate</name>
    </ligand>
</feature>
<feature type="modified residue" description="N6-carboxylysine" evidence="1">
    <location>
        <position position="157"/>
    </location>
</feature>
<sequence length="386" mass="41619">MTIIVDYRFPPAINAEKQAKTIAIGQTAGTWSERHSHRQKQLQQHLAEVVGIREEADGYKVARVRFPQINVENDIASLLTMIFGKYSMAGAGKVVGVYLPESYGTKAKLGITGIRQRLGVYDRPLVMAIFKPALGLSAQDHADILREVAFAGLDVIKDDEIMADLPVAPTHERLDCCRRVLEEVRQQTGRNVLYAVNVTGKADELQRKARLLVKHGANALLLNVLTYGFSVLEALASDPAIDVPIFAHPAFAGAMCAGSDTGLAYSVVLGTMMAHAGADAVLYPAAYGSLPFDPQEEGKIRDILRDRNVFPVPSAGIRPGIVPQVLGDYGRNVILNAGTGIMDHPSGPASGVRAFFEALARIEAGESFDPANLPEGALKQAILEWG</sequence>
<reference key="1">
    <citation type="journal article" date="2006" name="J. Biol. Chem.">
        <title>A new Rubisco-like protein coexists with a photosynthetic Rubisco in the planktonic cyanobacteria Microcystis.</title>
        <authorList>
            <person name="Carre-Mlouka A."/>
            <person name="Mejean A."/>
            <person name="Quillardet P."/>
            <person name="Ashida H."/>
            <person name="Saito Y."/>
            <person name="Yokota A."/>
            <person name="Callebaut I."/>
            <person name="Sekowska A."/>
            <person name="Dittmann E."/>
            <person name="Bouchier C."/>
            <person name="de Marsac N.T."/>
        </authorList>
    </citation>
    <scope>NUCLEOTIDE SEQUENCE [GENOMIC DNA]</scope>
    <scope>FUNCTION</scope>
    <scope>SUBUNIT</scope>
    <scope>BIOPHYSICOCHEMICAL PROPERTIES</scope>
    <source>
        <strain>PCC 7806</strain>
    </source>
</reference>
<reference key="2">
    <citation type="journal article" date="2008" name="BMC Genomics">
        <title>Highly plastic genome of Microcystis aeruginosa PCC 7806, a ubiquitous toxic freshwater cyanobacterium.</title>
        <authorList>
            <person name="Frangeul L."/>
            <person name="Quillardet P."/>
            <person name="Castets A.M."/>
            <person name="Humbert J.F."/>
            <person name="Matthijs H.C."/>
            <person name="Cortez D."/>
            <person name="Tolonen A."/>
            <person name="Zhang C.C."/>
            <person name="Gribaldo S."/>
            <person name="Kehr J.C."/>
            <person name="Zilliges Y."/>
            <person name="Ziemert N."/>
            <person name="Becker S."/>
            <person name="Talla E."/>
            <person name="Latifi A."/>
            <person name="Billault A."/>
            <person name="Lepelletier A."/>
            <person name="Dittmann E."/>
            <person name="Bouchier C."/>
            <person name="de Marsac N.T."/>
        </authorList>
    </citation>
    <scope>NUCLEOTIDE SEQUENCE [LARGE SCALE GENOMIC DNA]</scope>
    <source>
        <strain>PCC 7806</strain>
    </source>
</reference>
<accession>A8YER2</accession>
<accession>Q0P7L2</accession>
<evidence type="ECO:0000250" key="1"/>
<evidence type="ECO:0000269" key="2">
    <source>
    </source>
</evidence>
<evidence type="ECO:0000305" key="3"/>
<gene>
    <name type="primary">mtnW</name>
    <name type="synonym">rbcLIV</name>
    <name type="ORF">IPF_2991</name>
</gene>
<name>MTNW_MICAE</name>
<dbReference type="EC" id="5.3.2.5"/>
<dbReference type="EMBL" id="AM157794">
    <property type="protein sequence ID" value="CAJ43366.1"/>
    <property type="molecule type" value="Genomic_DNA"/>
</dbReference>
<dbReference type="EMBL" id="AM778930">
    <property type="protein sequence ID" value="CAO89633.1"/>
    <property type="molecule type" value="Genomic_DNA"/>
</dbReference>
<dbReference type="SMR" id="A8YER2"/>
<dbReference type="UniPathway" id="UPA00904">
    <property type="reaction ID" value="UER00876"/>
</dbReference>
<dbReference type="GO" id="GO:0043715">
    <property type="term" value="F:2,3-diketo-5-methylthiopentyl-1-phosphate enolase activity"/>
    <property type="evidence" value="ECO:0007669"/>
    <property type="project" value="UniProtKB-UniRule"/>
</dbReference>
<dbReference type="GO" id="GO:0000287">
    <property type="term" value="F:magnesium ion binding"/>
    <property type="evidence" value="ECO:0007669"/>
    <property type="project" value="UniProtKB-UniRule"/>
</dbReference>
<dbReference type="GO" id="GO:0016984">
    <property type="term" value="F:ribulose-bisphosphate carboxylase activity"/>
    <property type="evidence" value="ECO:0007669"/>
    <property type="project" value="InterPro"/>
</dbReference>
<dbReference type="GO" id="GO:0015977">
    <property type="term" value="P:carbon fixation"/>
    <property type="evidence" value="ECO:0007669"/>
    <property type="project" value="InterPro"/>
</dbReference>
<dbReference type="GO" id="GO:0019509">
    <property type="term" value="P:L-methionine salvage from methylthioadenosine"/>
    <property type="evidence" value="ECO:0007669"/>
    <property type="project" value="UniProtKB-UniRule"/>
</dbReference>
<dbReference type="CDD" id="cd08209">
    <property type="entry name" value="RLP_DK-MTP-1-P-enolase"/>
    <property type="match status" value="1"/>
</dbReference>
<dbReference type="Gene3D" id="3.20.20.110">
    <property type="entry name" value="Ribulose bisphosphate carboxylase, large subunit, C-terminal domain"/>
    <property type="match status" value="1"/>
</dbReference>
<dbReference type="Gene3D" id="3.30.70.150">
    <property type="entry name" value="RuBisCO large subunit, N-terminal domain"/>
    <property type="match status" value="1"/>
</dbReference>
<dbReference type="HAMAP" id="MF_01679">
    <property type="entry name" value="Salvage_MtnW"/>
    <property type="match status" value="1"/>
</dbReference>
<dbReference type="InterPro" id="IPR017717">
    <property type="entry name" value="Diketo-Methiopentyl-P_enolase"/>
</dbReference>
<dbReference type="InterPro" id="IPR033966">
    <property type="entry name" value="RuBisCO"/>
</dbReference>
<dbReference type="InterPro" id="IPR000685">
    <property type="entry name" value="RuBisCO_lsu_C"/>
</dbReference>
<dbReference type="InterPro" id="IPR036376">
    <property type="entry name" value="RuBisCO_lsu_C_sf"/>
</dbReference>
<dbReference type="InterPro" id="IPR017443">
    <property type="entry name" value="RuBisCO_lsu_fd_N"/>
</dbReference>
<dbReference type="InterPro" id="IPR036422">
    <property type="entry name" value="RuBisCO_lsu_N_sf"/>
</dbReference>
<dbReference type="PANTHER" id="PTHR42704">
    <property type="entry name" value="RIBULOSE BISPHOSPHATE CARBOXYLASE"/>
    <property type="match status" value="1"/>
</dbReference>
<dbReference type="PANTHER" id="PTHR42704:SF17">
    <property type="entry name" value="RIBULOSE BISPHOSPHATE CARBOXYLASE LARGE CHAIN"/>
    <property type="match status" value="1"/>
</dbReference>
<dbReference type="Pfam" id="PF00016">
    <property type="entry name" value="RuBisCO_large"/>
    <property type="match status" value="1"/>
</dbReference>
<dbReference type="Pfam" id="PF02788">
    <property type="entry name" value="RuBisCO_large_N"/>
    <property type="match status" value="1"/>
</dbReference>
<dbReference type="SFLD" id="SFLDF00157">
    <property type="entry name" value="2_3-diketo-5-methylthiopentyl"/>
    <property type="match status" value="1"/>
</dbReference>
<dbReference type="SFLD" id="SFLDS00014">
    <property type="entry name" value="RuBisCO"/>
    <property type="match status" value="1"/>
</dbReference>
<dbReference type="SUPFAM" id="SSF51649">
    <property type="entry name" value="RuBisCo, C-terminal domain"/>
    <property type="match status" value="1"/>
</dbReference>
<dbReference type="SUPFAM" id="SSF54966">
    <property type="entry name" value="RuBisCO, large subunit, small (N-terminal) domain"/>
    <property type="match status" value="1"/>
</dbReference>
<protein>
    <recommendedName>
        <fullName>2,3-diketo-5-methylthiopentyl-1-phosphate enolase</fullName>
        <shortName>DK-MTP-1-P enolase</shortName>
        <ecNumber>5.3.2.5</ecNumber>
    </recommendedName>
    <alternativeName>
        <fullName>RuBisCO-like protein</fullName>
        <shortName>RLP</shortName>
    </alternativeName>
</protein>
<comment type="function">
    <text evidence="2">Catalyzes the enolization of 2,3-diketo-5-methylthiopentyl-1-phosphate (DK-MTP-1-P) into 2-hydroxy-3-keto-5-methylthiopentenyl-1-phosphate (HK-MTPenyl-1-P).</text>
</comment>
<comment type="catalytic activity">
    <reaction>
        <text>5-methylsulfanyl-2,3-dioxopentyl phosphate = 2-hydroxy-5-methylsulfanyl-3-oxopent-1-enyl phosphate</text>
        <dbReference type="Rhea" id="RHEA:18769"/>
        <dbReference type="ChEBI" id="CHEBI:58828"/>
        <dbReference type="ChEBI" id="CHEBI:59505"/>
        <dbReference type="EC" id="5.3.2.5"/>
    </reaction>
</comment>
<comment type="cofactor">
    <cofactor evidence="3">
        <name>Mg(2+)</name>
        <dbReference type="ChEBI" id="CHEBI:18420"/>
    </cofactor>
    <text evidence="3">Binds 1 Mg(2+) ion per subunit.</text>
</comment>
<comment type="biophysicochemical properties">
    <kinetics>
        <KM evidence="2">13 uM for 2,3-diketo-5-methylthiopentyl-1-phosphate (at pH 8 and 37 degrees Celsius)</KM>
    </kinetics>
</comment>
<comment type="pathway">
    <text>Amino-acid biosynthesis; L-methionine biosynthesis via salvage pathway; L-methionine from S-methyl-5-thio-alpha-D-ribose 1-phosphate: step 3/6.</text>
</comment>
<comment type="subunit">
    <text evidence="2">Homodimer.</text>
</comment>
<comment type="miscellaneous">
    <text>Has no RuBP-carboxylation activity.</text>
</comment>
<comment type="similarity">
    <text evidence="3">Belongs to the RuBisCO large chain family. Type IV subfamily.</text>
</comment>
<keyword id="KW-0028">Amino-acid biosynthesis</keyword>
<keyword id="KW-0413">Isomerase</keyword>
<keyword id="KW-0460">Magnesium</keyword>
<keyword id="KW-0479">Metal-binding</keyword>
<keyword id="KW-0486">Methionine biosynthesis</keyword>
<proteinExistence type="evidence at protein level"/>